<sequence>MIKRETRLRAKILGINANASSHNGECGNASSEITTVWIIEHMKNNLVTKWLNRVLHTSLKMVWYVYRGFNNSLGVCIICLPCNVLSSSQSHLLIAKESALPVSDSRCYYIL</sequence>
<name>YM31A_YEAST</name>
<comment type="miscellaneous">
    <text evidence="1">Partially overlaps NDC1.</text>
</comment>
<comment type="caution">
    <text evidence="2">Product of a dubious gene prediction unlikely to encode a functional protein. Because of that it is not part of the S.cerevisiae S288c complete/reference proteome set.</text>
</comment>
<gene>
    <name evidence="3" type="ordered locus">YML031C-A</name>
</gene>
<evidence type="ECO:0000305" key="1"/>
<evidence type="ECO:0000305" key="2">
    <source>
    </source>
</evidence>
<evidence type="ECO:0000312" key="3">
    <source>
        <dbReference type="SGD" id="S000028809"/>
    </source>
</evidence>
<proteinExistence type="uncertain"/>
<accession>A0A023PXH2</accession>
<feature type="chain" id="PRO_0000431048" description="Putative uncharacterized membrane protein YML031C-A">
    <location>
        <begin position="1"/>
        <end position="111"/>
    </location>
</feature>
<protein>
    <recommendedName>
        <fullName evidence="1">Putative uncharacterized membrane protein YML031C-A</fullName>
    </recommendedName>
</protein>
<dbReference type="EMBL" id="KJ412286">
    <property type="protein sequence ID" value="AHX39329.1"/>
    <property type="molecule type" value="Genomic_DNA"/>
</dbReference>
<dbReference type="PIR" id="S69852">
    <property type="entry name" value="S69852"/>
</dbReference>
<dbReference type="PaxDb" id="4932-YML031C-A"/>
<dbReference type="EnsemblFungi" id="YML031C-A_mRNA">
    <property type="protein sequence ID" value="YML031C-A"/>
    <property type="gene ID" value="YML031C-A"/>
</dbReference>
<dbReference type="AGR" id="SGD:S000028809"/>
<dbReference type="SGD" id="S000028809">
    <property type="gene designation" value="YML031C-A"/>
</dbReference>
<dbReference type="HOGENOM" id="CLU_2159851_0_0_1"/>
<reference key="1">
    <citation type="journal article" date="1997" name="Nature">
        <title>The nucleotide sequence of Saccharomyces cerevisiae chromosome XIII.</title>
        <authorList>
            <person name="Bowman S."/>
            <person name="Churcher C.M."/>
            <person name="Badcock K."/>
            <person name="Brown D."/>
            <person name="Chillingworth T."/>
            <person name="Connor R."/>
            <person name="Dedman K."/>
            <person name="Devlin K."/>
            <person name="Gentles S."/>
            <person name="Hamlin N."/>
            <person name="Hunt S."/>
            <person name="Jagels K."/>
            <person name="Lye G."/>
            <person name="Moule S."/>
            <person name="Odell C."/>
            <person name="Pearson D."/>
            <person name="Rajandream M.A."/>
            <person name="Rice P."/>
            <person name="Skelton J."/>
            <person name="Walsh S.V."/>
            <person name="Whitehead S."/>
            <person name="Barrell B.G."/>
        </authorList>
    </citation>
    <scope>NUCLEOTIDE SEQUENCE [LARGE SCALE GENOMIC DNA]</scope>
    <source>
        <strain>ATCC 204508 / S288c</strain>
    </source>
</reference>
<reference key="2">
    <citation type="journal article" date="2014" name="G3 (Bethesda)">
        <title>The reference genome sequence of Saccharomyces cerevisiae: Then and now.</title>
        <authorList>
            <person name="Engel S.R."/>
            <person name="Dietrich F.S."/>
            <person name="Fisk D.G."/>
            <person name="Binkley G."/>
            <person name="Balakrishnan R."/>
            <person name="Costanzo M.C."/>
            <person name="Dwight S.S."/>
            <person name="Hitz B.C."/>
            <person name="Karra K."/>
            <person name="Nash R.S."/>
            <person name="Weng S."/>
            <person name="Wong E.D."/>
            <person name="Lloyd P."/>
            <person name="Skrzypek M.S."/>
            <person name="Miyasato S.R."/>
            <person name="Simison M."/>
            <person name="Cherry J.M."/>
        </authorList>
    </citation>
    <scope>GENOME REANNOTATION</scope>
    <source>
        <strain>ATCC 204508 / S288c</strain>
    </source>
</reference>
<organism>
    <name type="scientific">Saccharomyces cerevisiae (strain ATCC 204508 / S288c)</name>
    <name type="common">Baker's yeast</name>
    <dbReference type="NCBI Taxonomy" id="559292"/>
    <lineage>
        <taxon>Eukaryota</taxon>
        <taxon>Fungi</taxon>
        <taxon>Dikarya</taxon>
        <taxon>Ascomycota</taxon>
        <taxon>Saccharomycotina</taxon>
        <taxon>Saccharomycetes</taxon>
        <taxon>Saccharomycetales</taxon>
        <taxon>Saccharomycetaceae</taxon>
        <taxon>Saccharomyces</taxon>
    </lineage>
</organism>